<sequence>MASLLKSLALFKRAKDKPPLAAGSGGAIRGIKHVIVVPIPGDSSITTRSRLLDRLVKMVGDPDISGPKLTGALISILSLFVESPGQLIQRITDDPDISIKLVEVVQSDKTQSGLTFASRGTSMDDEADRYFTYEEPNDGEERQSYWFENRDIQDIEIQDPEGFNMILATILAQIWILLAKAVTAPDTAAESELRRWVKYTQQRRVIGEFRLDKGWLDTVRNRVAEDLSLRRFMVALILDIKRTPGNKPRIAEMICDIDTYIVEAGLASFILTIKFGIETMYPALGLHEFAGELSTIESLMNLYQQMGELAPYMVILENSIQNKFSAGAYPLLWSYAMGIGVELENSMGGLNFGRSYFDPAYFRLGQEMVRRSAGKVSSNLASELGITEEEARLVSEIAAYTSDDRNNRTSGPKQAQVSFLRTDQGSEAQHSASKKDEARAPQVKKETRTSSKSDKHKEGTDKEPVSSSAMTLIDVDTTLEADTDPLESKKSAEALLRLQAMAGILGDSTLGNDSLRAYNDKDILN</sequence>
<evidence type="ECO:0000250" key="1">
    <source>
        <dbReference type="UniProtKB" id="O57286"/>
    </source>
</evidence>
<evidence type="ECO:0000250" key="2">
    <source>
        <dbReference type="UniProtKB" id="P06159"/>
    </source>
</evidence>
<evidence type="ECO:0000250" key="3">
    <source>
        <dbReference type="UniProtKB" id="P10050"/>
    </source>
</evidence>
<evidence type="ECO:0000250" key="4">
    <source>
        <dbReference type="UniProtKB" id="Q07097"/>
    </source>
</evidence>
<evidence type="ECO:0000250" key="5">
    <source>
        <dbReference type="UniProtKB" id="Q77M43"/>
    </source>
</evidence>
<evidence type="ECO:0000250" key="6">
    <source>
        <dbReference type="UniProtKB" id="Q89933"/>
    </source>
</evidence>
<evidence type="ECO:0000250" key="7">
    <source>
        <dbReference type="UniProtKB" id="Q9WMB5"/>
    </source>
</evidence>
<evidence type="ECO:0000256" key="8">
    <source>
        <dbReference type="SAM" id="MobiDB-lite"/>
    </source>
</evidence>
<evidence type="ECO:0000305" key="9"/>
<proteinExistence type="inferred from homology"/>
<dbReference type="EMBL" id="X68311">
    <property type="protein sequence ID" value="CAA48388.1"/>
    <property type="molecule type" value="Genomic_RNA"/>
</dbReference>
<dbReference type="EMBL" id="Z30697">
    <property type="protein sequence ID" value="CAA83177.1"/>
    <property type="molecule type" value="Genomic_RNA"/>
</dbReference>
<dbReference type="PIR" id="S24791">
    <property type="entry name" value="S24791"/>
</dbReference>
<dbReference type="SMR" id="Q03332"/>
<dbReference type="Proteomes" id="UP000008654">
    <property type="component" value="Genome"/>
</dbReference>
<dbReference type="GO" id="GO:0019029">
    <property type="term" value="C:helical viral capsid"/>
    <property type="evidence" value="ECO:0007669"/>
    <property type="project" value="UniProtKB-KW"/>
</dbReference>
<dbReference type="GO" id="GO:0030430">
    <property type="term" value="C:host cell cytoplasm"/>
    <property type="evidence" value="ECO:0007669"/>
    <property type="project" value="UniProtKB-SubCell"/>
</dbReference>
<dbReference type="GO" id="GO:1990904">
    <property type="term" value="C:ribonucleoprotein complex"/>
    <property type="evidence" value="ECO:0007669"/>
    <property type="project" value="UniProtKB-KW"/>
</dbReference>
<dbReference type="GO" id="GO:0019013">
    <property type="term" value="C:viral nucleocapsid"/>
    <property type="evidence" value="ECO:0007669"/>
    <property type="project" value="UniProtKB-KW"/>
</dbReference>
<dbReference type="GO" id="GO:0003723">
    <property type="term" value="F:RNA binding"/>
    <property type="evidence" value="ECO:0007669"/>
    <property type="project" value="UniProtKB-KW"/>
</dbReference>
<dbReference type="GO" id="GO:0005198">
    <property type="term" value="F:structural molecule activity"/>
    <property type="evidence" value="ECO:0007669"/>
    <property type="project" value="InterPro"/>
</dbReference>
<dbReference type="InterPro" id="IPR002021">
    <property type="entry name" value="Paramyx_ncap"/>
</dbReference>
<dbReference type="Pfam" id="PF00973">
    <property type="entry name" value="Paramyxo_ncap"/>
    <property type="match status" value="1"/>
</dbReference>
<gene>
    <name type="primary">N</name>
    <name type="synonym">NP</name>
</gene>
<name>NCAP_RINDR</name>
<keyword id="KW-0167">Capsid protein</keyword>
<keyword id="KW-1139">Helical capsid protein</keyword>
<keyword id="KW-1035">Host cytoplasm</keyword>
<keyword id="KW-1185">Reference proteome</keyword>
<keyword id="KW-0687">Ribonucleoprotein</keyword>
<keyword id="KW-0694">RNA-binding</keyword>
<keyword id="KW-0543">Viral nucleoprotein</keyword>
<keyword id="KW-0946">Virion</keyword>
<reference key="1">
    <citation type="journal article" date="1993" name="J. Gen. Virol.">
        <title>Cloning and sequence analysis of the phosphoprotein gene of rinderpest virus.</title>
        <authorList>
            <person name="Baron M.D."/>
            <person name="Shaila M.S."/>
            <person name="Barrett T."/>
        </authorList>
    </citation>
    <scope>NUCLEOTIDE SEQUENCE [GENOMIC RNA]</scope>
</reference>
<organism>
    <name type="scientific">Rinderpest virus (strain RBOK)</name>
    <name type="common">RDV</name>
    <dbReference type="NCBI Taxonomy" id="36409"/>
    <lineage>
        <taxon>Viruses</taxon>
        <taxon>Riboviria</taxon>
        <taxon>Orthornavirae</taxon>
        <taxon>Negarnaviricota</taxon>
        <taxon>Haploviricotina</taxon>
        <taxon>Monjiviricetes</taxon>
        <taxon>Mononegavirales</taxon>
        <taxon>Paramyxoviridae</taxon>
        <taxon>Orthoparamyxovirinae</taxon>
        <taxon>Morbillivirus</taxon>
        <taxon>Morbillivirus pecoris</taxon>
        <taxon>Rinderpest morbillivirus</taxon>
    </lineage>
</organism>
<comment type="function">
    <text evidence="2 5">Forms the helical nucleocapsid (NC) in a ratio of 1 N per 6 ribonucleotides, protecting the genome from nucleases. The nucleocapsid (NC) has a helical structure with either 12.35 or 11.64 N per turn, approximately 20 nm in diameter, with a hollow central cavity approximately 5 nm in diameter (By similarity). The encapsidated genomic RNA serves as template for transcription and replication; encapsidation by N is coupled to RNA synthesis. Forms the encapsidation complex with the phosphoprotein protein P. Before encapsidation, the newly synthesized free N protein, so-called N0, is chaperoned by P (By similarity). Participates, together with P, in the formation of viral factories (viroplasms), which are large inclusions in the host cytoplasm where replication takes place (By similarity).</text>
</comment>
<comment type="subunit">
    <text evidence="1 2 4 5">Homomultimer; forms the nucleocapsid (By similarity). Binds to viral genomic RNA (By similarity). N0 interacts (via Ncore) with the phosphoprotein (via N-terminus); this interaction allows P to chaperon N0 to avoid N polymerization before encapsidation (By similarity). Interacts as N-RNA template with the phosphoprotein (via C-terminus); this interaction positions the polymerase on the template (By similarity). Interacts with the phosphoprotein; this interaction leads to the formation of membraneless organelles that function as viral replication factories (By similarity).</text>
</comment>
<comment type="subcellular location">
    <subcellularLocation>
        <location evidence="7">Virion</location>
    </subcellularLocation>
    <subcellularLocation>
        <location evidence="7">Host cytoplasm</location>
    </subcellularLocation>
</comment>
<comment type="domain">
    <text evidence="5">Ncore is globular and carries regions required for N self-assembly and RNA-binding. Ntail is an intrinsically disordered monomeric domain in the C-terminus.</text>
</comment>
<comment type="similarity">
    <text evidence="9">Belongs to the paramyxoviruses nucleocapsid family.</text>
</comment>
<feature type="chain" id="PRO_0000142677" description="Nucleoprotein">
    <location>
        <begin position="1"/>
        <end position="525"/>
    </location>
</feature>
<feature type="region of interest" description="Ncore" evidence="2">
    <location>
        <begin position="1"/>
        <end position="403"/>
    </location>
</feature>
<feature type="region of interest" description="RNA packaging and organization of the helical nucleocapsid" evidence="6">
    <location>
        <begin position="1"/>
        <end position="375"/>
    </location>
</feature>
<feature type="region of interest" description="Homomultimerization" evidence="3">
    <location>
        <begin position="1"/>
        <end position="36"/>
    </location>
</feature>
<feature type="region of interest" description="Homomultimerization" evidence="3">
    <location>
        <begin position="373"/>
        <end position="391"/>
    </location>
</feature>
<feature type="region of interest" description="Disordered" evidence="8">
    <location>
        <begin position="403"/>
        <end position="472"/>
    </location>
</feature>
<feature type="region of interest" description="Ntail" evidence="2">
    <location>
        <begin position="404"/>
        <end position="525"/>
    </location>
</feature>
<feature type="region of interest" description="Interaction with the phosphoprotein" evidence="5">
    <location>
        <begin position="477"/>
        <end position="505"/>
    </location>
</feature>
<feature type="compositionally biased region" description="Polar residues" evidence="8">
    <location>
        <begin position="408"/>
        <end position="431"/>
    </location>
</feature>
<feature type="compositionally biased region" description="Basic and acidic residues" evidence="8">
    <location>
        <begin position="433"/>
        <end position="464"/>
    </location>
</feature>
<feature type="binding site" evidence="5">
    <location>
        <position position="180"/>
    </location>
    <ligand>
        <name>RNA</name>
        <dbReference type="ChEBI" id="CHEBI:33697"/>
    </ligand>
</feature>
<feature type="binding site" evidence="5">
    <location>
        <position position="195"/>
    </location>
    <ligand>
        <name>RNA</name>
        <dbReference type="ChEBI" id="CHEBI:33697"/>
    </ligand>
</feature>
<feature type="binding site" evidence="5">
    <location>
        <position position="202"/>
    </location>
    <ligand>
        <name>RNA</name>
        <dbReference type="ChEBI" id="CHEBI:33697"/>
    </ligand>
</feature>
<feature type="binding site" evidence="5">
    <location>
        <position position="260"/>
    </location>
    <ligand>
        <name>RNA</name>
        <dbReference type="ChEBI" id="CHEBI:33697"/>
    </ligand>
</feature>
<feature type="binding site" evidence="5">
    <location>
        <position position="351"/>
    </location>
    <ligand>
        <name>RNA</name>
        <dbReference type="ChEBI" id="CHEBI:33697"/>
    </ligand>
</feature>
<organismHost>
    <name type="scientific">Bos indicus</name>
    <name type="common">Zebu</name>
    <dbReference type="NCBI Taxonomy" id="9915"/>
</organismHost>
<organismHost>
    <name type="scientific">Bos taurus</name>
    <name type="common">Bovine</name>
    <dbReference type="NCBI Taxonomy" id="9913"/>
</organismHost>
<organismHost>
    <name type="scientific">Bubalus bubalis</name>
    <name type="common">Domestic water buffalo</name>
    <dbReference type="NCBI Taxonomy" id="89462"/>
</organismHost>
<organismHost>
    <name type="scientific">Capra hircus</name>
    <name type="common">Goat</name>
    <dbReference type="NCBI Taxonomy" id="9925"/>
</organismHost>
<organismHost>
    <name type="scientific">Gazella</name>
    <name type="common">gazelles</name>
    <dbReference type="NCBI Taxonomy" id="9933"/>
</organismHost>
<organismHost>
    <name type="scientific">Giraffa camelopardalis</name>
    <name type="common">Giraffe</name>
    <dbReference type="NCBI Taxonomy" id="9894"/>
</organismHost>
<organismHost>
    <name type="scientific">Hippopotamus</name>
    <dbReference type="NCBI Taxonomy" id="9832"/>
</organismHost>
<organismHost>
    <name type="scientific">Ovis aries</name>
    <name type="common">Sheep</name>
    <dbReference type="NCBI Taxonomy" id="9940"/>
</organismHost>
<organismHost>
    <name type="scientific">Suidae</name>
    <name type="common">pigs</name>
    <dbReference type="NCBI Taxonomy" id="9821"/>
</organismHost>
<accession>Q03332</accession>
<protein>
    <recommendedName>
        <fullName>Nucleoprotein</fullName>
    </recommendedName>
    <alternativeName>
        <fullName>Nucleocapsid protein</fullName>
        <shortName>NP</shortName>
        <shortName>Protein N</shortName>
    </alternativeName>
</protein>